<comment type="function">
    <text>Potential apoptotic regulator.</text>
</comment>
<comment type="interaction">
    <interactant intactId="EBI-2832909">
        <id>Q7Z429</id>
    </interactant>
    <interactant intactId="EBI-12701460">
        <id>Q01740</id>
        <label>FMO1</label>
    </interactant>
    <organismsDiffer>false</organismsDiffer>
    <experiments>3</experiments>
</comment>
<comment type="interaction">
    <interactant intactId="EBI-2832909">
        <id>Q7Z429</id>
    </interactant>
    <interactant intactId="EBI-2868927">
        <id>Q6P531</id>
        <label>GGT6</label>
    </interactant>
    <organismsDiffer>false</organismsDiffer>
    <experiments>3</experiments>
</comment>
<comment type="interaction">
    <interactant intactId="EBI-2832909">
        <id>Q7Z429</id>
    </interactant>
    <interactant intactId="EBI-11721746">
        <id>Q8TED1</id>
        <label>GPX8</label>
    </interactant>
    <organismsDiffer>false</organismsDiffer>
    <experiments>3</experiments>
</comment>
<comment type="interaction">
    <interactant intactId="EBI-2832909">
        <id>Q7Z429</id>
    </interactant>
    <interactant intactId="EBI-1048945">
        <id>Q3LI72</id>
        <label>KRTAP19-5</label>
    </interactant>
    <organismsDiffer>false</organismsDiffer>
    <experiments>3</experiments>
</comment>
<comment type="interaction">
    <interactant intactId="EBI-2832909">
        <id>Q7Z429</id>
    </interactant>
    <interactant intactId="EBI-11962084">
        <id>Q3LI66</id>
        <label>KRTAP6-2</label>
    </interactant>
    <organismsDiffer>false</organismsDiffer>
    <experiments>3</experiments>
</comment>
<comment type="interaction">
    <interactant intactId="EBI-2832909">
        <id>Q7Z429</id>
    </interactant>
    <interactant intactId="EBI-11064654">
        <id>Q01085-2</id>
        <label>TIAL1</label>
    </interactant>
    <organismsDiffer>false</organismsDiffer>
    <experiments>3</experiments>
</comment>
<comment type="interaction">
    <interactant intactId="EBI-2832909">
        <id>Q7Z429</id>
    </interactant>
    <interactant intactId="EBI-10315004">
        <id>Q9NWH2</id>
        <label>TMEM242</label>
    </interactant>
    <organismsDiffer>false</organismsDiffer>
    <experiments>3</experiments>
</comment>
<comment type="subcellular location">
    <subcellularLocation>
        <location evidence="4">Membrane</location>
        <topology evidence="4">Multi-pass membrane protein</topology>
    </subcellularLocation>
</comment>
<comment type="similarity">
    <text evidence="4">Belongs to the BI1 family. LFG subfamily.</text>
</comment>
<comment type="sequence caution" evidence="4">
    <conflict type="frameshift">
        <sequence resource="EMBL-CDS" id="AAB94292"/>
    </conflict>
</comment>
<proteinExistence type="evidence at protein level"/>
<protein>
    <recommendedName>
        <fullName>Protein lifeguard 1</fullName>
    </recommendedName>
    <alternativeName>
        <fullName>Glutamate [NMDA] receptor-associated protein 1</fullName>
    </alternativeName>
    <alternativeName>
        <fullName>NMDA receptor glutamate-binding subunit</fullName>
    </alternativeName>
    <alternativeName>
        <fullName>Putative MAPK-activating protein PM02</fullName>
    </alternativeName>
    <alternativeName>
        <fullName>Transmembrane BAX inhibitor motif-containing protein 3</fullName>
    </alternativeName>
</protein>
<name>LFG1_HUMAN</name>
<dbReference type="EMBL" id="AB097026">
    <property type="protein sequence ID" value="BAC77379.1"/>
    <property type="molecule type" value="mRNA"/>
</dbReference>
<dbReference type="EMBL" id="AK127640">
    <property type="protein sequence ID" value="BAG54539.1"/>
    <property type="molecule type" value="mRNA"/>
</dbReference>
<dbReference type="EMBL" id="CH471416">
    <property type="protein sequence ID" value="EAW52305.1"/>
    <property type="molecule type" value="Genomic_DNA"/>
</dbReference>
<dbReference type="EMBL" id="BC041788">
    <property type="protein sequence ID" value="AAH41788.2"/>
    <property type="molecule type" value="mRNA"/>
</dbReference>
<dbReference type="EMBL" id="BC084553">
    <property type="protein sequence ID" value="AAH84553.1"/>
    <property type="molecule type" value="mRNA"/>
</dbReference>
<dbReference type="EMBL" id="U44954">
    <property type="protein sequence ID" value="AAB94292.1"/>
    <property type="status" value="ALT_FRAME"/>
    <property type="molecule type" value="mRNA"/>
</dbReference>
<dbReference type="CCDS" id="CCDS34961.1"/>
<dbReference type="RefSeq" id="NP_000828.1">
    <property type="nucleotide sequence ID" value="NM_000837.2"/>
</dbReference>
<dbReference type="RefSeq" id="NP_001009184.1">
    <property type="nucleotide sequence ID" value="NM_001009184.2"/>
</dbReference>
<dbReference type="SMR" id="Q7Z429"/>
<dbReference type="BioGRID" id="109164">
    <property type="interactions" value="12"/>
</dbReference>
<dbReference type="DIP" id="DIP-47262N"/>
<dbReference type="FunCoup" id="Q7Z429">
    <property type="interactions" value="432"/>
</dbReference>
<dbReference type="IntAct" id="Q7Z429">
    <property type="interactions" value="11"/>
</dbReference>
<dbReference type="MINT" id="Q7Z429"/>
<dbReference type="STRING" id="9606.ENSP00000314380"/>
<dbReference type="TCDB" id="1.A.14.3.14">
    <property type="family name" value="the calcium transporter a (cata) family (formerly the testis-enhanced gene transfer (tegt) family)"/>
</dbReference>
<dbReference type="GlyGen" id="Q7Z429">
    <property type="glycosylation" value="1 site, 1 O-linked glycan (1 site)"/>
</dbReference>
<dbReference type="iPTMnet" id="Q7Z429"/>
<dbReference type="PhosphoSitePlus" id="Q7Z429"/>
<dbReference type="BioMuta" id="GRINA"/>
<dbReference type="DMDM" id="74738689"/>
<dbReference type="MassIVE" id="Q7Z429"/>
<dbReference type="PaxDb" id="9606-ENSP00000314380"/>
<dbReference type="PeptideAtlas" id="Q7Z429"/>
<dbReference type="ProteomicsDB" id="69135"/>
<dbReference type="TopDownProteomics" id="Q7Z429"/>
<dbReference type="Antibodypedia" id="48337">
    <property type="antibodies" value="185 antibodies from 25 providers"/>
</dbReference>
<dbReference type="DNASU" id="2907"/>
<dbReference type="Ensembl" id="ENST00000313269.5">
    <property type="protein sequence ID" value="ENSP00000314380.5"/>
    <property type="gene ID" value="ENSG00000178719.17"/>
</dbReference>
<dbReference type="Ensembl" id="ENST00000395068.9">
    <property type="protein sequence ID" value="ENSP00000378507.4"/>
    <property type="gene ID" value="ENSG00000178719.17"/>
</dbReference>
<dbReference type="GeneID" id="2907"/>
<dbReference type="KEGG" id="hsa:2907"/>
<dbReference type="MANE-Select" id="ENST00000395068.9">
    <property type="protein sequence ID" value="ENSP00000378507.4"/>
    <property type="RefSeq nucleotide sequence ID" value="NM_001009184.2"/>
    <property type="RefSeq protein sequence ID" value="NP_001009184.1"/>
</dbReference>
<dbReference type="UCSC" id="uc003zan.2">
    <property type="organism name" value="human"/>
</dbReference>
<dbReference type="AGR" id="HGNC:4589"/>
<dbReference type="CTD" id="2907"/>
<dbReference type="DisGeNET" id="2907"/>
<dbReference type="GeneCards" id="GRINA"/>
<dbReference type="HGNC" id="HGNC:4589">
    <property type="gene designation" value="GRINA"/>
</dbReference>
<dbReference type="HPA" id="ENSG00000178719">
    <property type="expression patterns" value="Low tissue specificity"/>
</dbReference>
<dbReference type="MIM" id="138251">
    <property type="type" value="gene"/>
</dbReference>
<dbReference type="neXtProt" id="NX_Q7Z429"/>
<dbReference type="OpenTargets" id="ENSG00000178719"/>
<dbReference type="PharmGKB" id="PA28985"/>
<dbReference type="VEuPathDB" id="HostDB:ENSG00000178719"/>
<dbReference type="eggNOG" id="KOG2322">
    <property type="taxonomic scope" value="Eukaryota"/>
</dbReference>
<dbReference type="GeneTree" id="ENSGT01050000244890"/>
<dbReference type="HOGENOM" id="CLU_058671_3_0_1"/>
<dbReference type="InParanoid" id="Q7Z429"/>
<dbReference type="OMA" id="YYVSYAF"/>
<dbReference type="OrthoDB" id="7933078at2759"/>
<dbReference type="PAN-GO" id="Q7Z429">
    <property type="GO annotations" value="4 GO annotations based on evolutionary models"/>
</dbReference>
<dbReference type="PhylomeDB" id="Q7Z429"/>
<dbReference type="TreeFam" id="TF319996"/>
<dbReference type="PathwayCommons" id="Q7Z429"/>
<dbReference type="SignaLink" id="Q7Z429"/>
<dbReference type="BioGRID-ORCS" id="2907">
    <property type="hits" value="11 hits in 1151 CRISPR screens"/>
</dbReference>
<dbReference type="ChiTaRS" id="GRINA">
    <property type="organism name" value="human"/>
</dbReference>
<dbReference type="GenomeRNAi" id="2907"/>
<dbReference type="Pharos" id="Q7Z429">
    <property type="development level" value="Tbio"/>
</dbReference>
<dbReference type="PRO" id="PR:Q7Z429"/>
<dbReference type="Proteomes" id="UP000005640">
    <property type="component" value="Chromosome 8"/>
</dbReference>
<dbReference type="RNAct" id="Q7Z429">
    <property type="molecule type" value="protein"/>
</dbReference>
<dbReference type="Bgee" id="ENSG00000178719">
    <property type="expression patterns" value="Expressed in left testis and 195 other cell types or tissues"/>
</dbReference>
<dbReference type="ExpressionAtlas" id="Q7Z429">
    <property type="expression patterns" value="baseline and differential"/>
</dbReference>
<dbReference type="GO" id="GO:0005783">
    <property type="term" value="C:endoplasmic reticulum"/>
    <property type="evidence" value="ECO:0000318"/>
    <property type="project" value="GO_Central"/>
</dbReference>
<dbReference type="GO" id="GO:0005794">
    <property type="term" value="C:Golgi apparatus"/>
    <property type="evidence" value="ECO:0000318"/>
    <property type="project" value="GO_Central"/>
</dbReference>
<dbReference type="GO" id="GO:0000139">
    <property type="term" value="C:Golgi membrane"/>
    <property type="evidence" value="ECO:0000314"/>
    <property type="project" value="FlyBase"/>
</dbReference>
<dbReference type="GO" id="GO:0016020">
    <property type="term" value="C:membrane"/>
    <property type="evidence" value="ECO:0000318"/>
    <property type="project" value="GO_Central"/>
</dbReference>
<dbReference type="GO" id="GO:0005262">
    <property type="term" value="F:calcium channel activity"/>
    <property type="evidence" value="ECO:0000318"/>
    <property type="project" value="GO_Central"/>
</dbReference>
<dbReference type="GO" id="GO:0044325">
    <property type="term" value="F:transmembrane transporter binding"/>
    <property type="evidence" value="ECO:0007669"/>
    <property type="project" value="Ensembl"/>
</dbReference>
<dbReference type="GO" id="GO:0097190">
    <property type="term" value="P:apoptotic signaling pathway"/>
    <property type="evidence" value="ECO:0000318"/>
    <property type="project" value="GO_Central"/>
</dbReference>
<dbReference type="GO" id="GO:0032469">
    <property type="term" value="P:endoplasmic reticulum calcium ion homeostasis"/>
    <property type="evidence" value="ECO:0007669"/>
    <property type="project" value="Ensembl"/>
</dbReference>
<dbReference type="GO" id="GO:1902236">
    <property type="term" value="P:negative regulation of endoplasmic reticulum stress-induced intrinsic apoptotic signaling pathway"/>
    <property type="evidence" value="ECO:0007669"/>
    <property type="project" value="Ensembl"/>
</dbReference>
<dbReference type="GO" id="GO:1902042">
    <property type="term" value="P:negative regulation of extrinsic apoptotic signaling pathway via death domain receptors"/>
    <property type="evidence" value="ECO:0000318"/>
    <property type="project" value="GO_Central"/>
</dbReference>
<dbReference type="GO" id="GO:0043524">
    <property type="term" value="P:negative regulation of neuron apoptotic process"/>
    <property type="evidence" value="ECO:0000318"/>
    <property type="project" value="GO_Central"/>
</dbReference>
<dbReference type="CDD" id="cd10428">
    <property type="entry name" value="LFG_like"/>
    <property type="match status" value="1"/>
</dbReference>
<dbReference type="InterPro" id="IPR006214">
    <property type="entry name" value="Bax_inhibitor_1-related"/>
</dbReference>
<dbReference type="PANTHER" id="PTHR23291">
    <property type="entry name" value="BAX INHIBITOR-RELATED"/>
    <property type="match status" value="1"/>
</dbReference>
<dbReference type="PANTHER" id="PTHR23291:SF16">
    <property type="entry name" value="PROTEIN LIFEGUARD 1"/>
    <property type="match status" value="1"/>
</dbReference>
<dbReference type="Pfam" id="PF01027">
    <property type="entry name" value="Bax1-I"/>
    <property type="match status" value="1"/>
</dbReference>
<reference key="1">
    <citation type="journal article" date="2003" name="Oncogene">
        <title>Large-scale identification and characterization of human genes that activate NF-kappaB and MAPK signaling pathways.</title>
        <authorList>
            <person name="Matsuda A."/>
            <person name="Suzuki Y."/>
            <person name="Honda G."/>
            <person name="Muramatsu S."/>
            <person name="Matsuzaki O."/>
            <person name="Nagano Y."/>
            <person name="Doi T."/>
            <person name="Shimotohno K."/>
            <person name="Harada T."/>
            <person name="Nishida E."/>
            <person name="Hayashi H."/>
            <person name="Sugano S."/>
        </authorList>
    </citation>
    <scope>NUCLEOTIDE SEQUENCE [LARGE SCALE MRNA]</scope>
    <source>
        <tissue>Lung</tissue>
    </source>
</reference>
<reference key="2">
    <citation type="journal article" date="2004" name="Nat. Genet.">
        <title>Complete sequencing and characterization of 21,243 full-length human cDNAs.</title>
        <authorList>
            <person name="Ota T."/>
            <person name="Suzuki Y."/>
            <person name="Nishikawa T."/>
            <person name="Otsuki T."/>
            <person name="Sugiyama T."/>
            <person name="Irie R."/>
            <person name="Wakamatsu A."/>
            <person name="Hayashi K."/>
            <person name="Sato H."/>
            <person name="Nagai K."/>
            <person name="Kimura K."/>
            <person name="Makita H."/>
            <person name="Sekine M."/>
            <person name="Obayashi M."/>
            <person name="Nishi T."/>
            <person name="Shibahara T."/>
            <person name="Tanaka T."/>
            <person name="Ishii S."/>
            <person name="Yamamoto J."/>
            <person name="Saito K."/>
            <person name="Kawai Y."/>
            <person name="Isono Y."/>
            <person name="Nakamura Y."/>
            <person name="Nagahari K."/>
            <person name="Murakami K."/>
            <person name="Yasuda T."/>
            <person name="Iwayanagi T."/>
            <person name="Wagatsuma M."/>
            <person name="Shiratori A."/>
            <person name="Sudo H."/>
            <person name="Hosoiri T."/>
            <person name="Kaku Y."/>
            <person name="Kodaira H."/>
            <person name="Kondo H."/>
            <person name="Sugawara M."/>
            <person name="Takahashi M."/>
            <person name="Kanda K."/>
            <person name="Yokoi T."/>
            <person name="Furuya T."/>
            <person name="Kikkawa E."/>
            <person name="Omura Y."/>
            <person name="Abe K."/>
            <person name="Kamihara K."/>
            <person name="Katsuta N."/>
            <person name="Sato K."/>
            <person name="Tanikawa M."/>
            <person name="Yamazaki M."/>
            <person name="Ninomiya K."/>
            <person name="Ishibashi T."/>
            <person name="Yamashita H."/>
            <person name="Murakawa K."/>
            <person name="Fujimori K."/>
            <person name="Tanai H."/>
            <person name="Kimata M."/>
            <person name="Watanabe M."/>
            <person name="Hiraoka S."/>
            <person name="Chiba Y."/>
            <person name="Ishida S."/>
            <person name="Ono Y."/>
            <person name="Takiguchi S."/>
            <person name="Watanabe S."/>
            <person name="Yosida M."/>
            <person name="Hotuta T."/>
            <person name="Kusano J."/>
            <person name="Kanehori K."/>
            <person name="Takahashi-Fujii A."/>
            <person name="Hara H."/>
            <person name="Tanase T.-O."/>
            <person name="Nomura Y."/>
            <person name="Togiya S."/>
            <person name="Komai F."/>
            <person name="Hara R."/>
            <person name="Takeuchi K."/>
            <person name="Arita M."/>
            <person name="Imose N."/>
            <person name="Musashino K."/>
            <person name="Yuuki H."/>
            <person name="Oshima A."/>
            <person name="Sasaki N."/>
            <person name="Aotsuka S."/>
            <person name="Yoshikawa Y."/>
            <person name="Matsunawa H."/>
            <person name="Ichihara T."/>
            <person name="Shiohata N."/>
            <person name="Sano S."/>
            <person name="Moriya S."/>
            <person name="Momiyama H."/>
            <person name="Satoh N."/>
            <person name="Takami S."/>
            <person name="Terashima Y."/>
            <person name="Suzuki O."/>
            <person name="Nakagawa S."/>
            <person name="Senoh A."/>
            <person name="Mizoguchi H."/>
            <person name="Goto Y."/>
            <person name="Shimizu F."/>
            <person name="Wakebe H."/>
            <person name="Hishigaki H."/>
            <person name="Watanabe T."/>
            <person name="Sugiyama A."/>
            <person name="Takemoto M."/>
            <person name="Kawakami B."/>
            <person name="Yamazaki M."/>
            <person name="Watanabe K."/>
            <person name="Kumagai A."/>
            <person name="Itakura S."/>
            <person name="Fukuzumi Y."/>
            <person name="Fujimori Y."/>
            <person name="Komiyama M."/>
            <person name="Tashiro H."/>
            <person name="Tanigami A."/>
            <person name="Fujiwara T."/>
            <person name="Ono T."/>
            <person name="Yamada K."/>
            <person name="Fujii Y."/>
            <person name="Ozaki K."/>
            <person name="Hirao M."/>
            <person name="Ohmori Y."/>
            <person name="Kawabata A."/>
            <person name="Hikiji T."/>
            <person name="Kobatake N."/>
            <person name="Inagaki H."/>
            <person name="Ikema Y."/>
            <person name="Okamoto S."/>
            <person name="Okitani R."/>
            <person name="Kawakami T."/>
            <person name="Noguchi S."/>
            <person name="Itoh T."/>
            <person name="Shigeta K."/>
            <person name="Senba T."/>
            <person name="Matsumura K."/>
            <person name="Nakajima Y."/>
            <person name="Mizuno T."/>
            <person name="Morinaga M."/>
            <person name="Sasaki M."/>
            <person name="Togashi T."/>
            <person name="Oyama M."/>
            <person name="Hata H."/>
            <person name="Watanabe M."/>
            <person name="Komatsu T."/>
            <person name="Mizushima-Sugano J."/>
            <person name="Satoh T."/>
            <person name="Shirai Y."/>
            <person name="Takahashi Y."/>
            <person name="Nakagawa K."/>
            <person name="Okumura K."/>
            <person name="Nagase T."/>
            <person name="Nomura N."/>
            <person name="Kikuchi H."/>
            <person name="Masuho Y."/>
            <person name="Yamashita R."/>
            <person name="Nakai K."/>
            <person name="Yada T."/>
            <person name="Nakamura Y."/>
            <person name="Ohara O."/>
            <person name="Isogai T."/>
            <person name="Sugano S."/>
        </authorList>
    </citation>
    <scope>NUCLEOTIDE SEQUENCE [LARGE SCALE MRNA]</scope>
    <source>
        <tissue>Kidney</tissue>
    </source>
</reference>
<reference key="3">
    <citation type="submission" date="2005-07" db="EMBL/GenBank/DDBJ databases">
        <authorList>
            <person name="Mural R.J."/>
            <person name="Istrail S."/>
            <person name="Sutton G.G."/>
            <person name="Florea L."/>
            <person name="Halpern A.L."/>
            <person name="Mobarry C.M."/>
            <person name="Lippert R."/>
            <person name="Walenz B."/>
            <person name="Shatkay H."/>
            <person name="Dew I."/>
            <person name="Miller J.R."/>
            <person name="Flanigan M.J."/>
            <person name="Edwards N.J."/>
            <person name="Bolanos R."/>
            <person name="Fasulo D."/>
            <person name="Halldorsson B.V."/>
            <person name="Hannenhalli S."/>
            <person name="Turner R."/>
            <person name="Yooseph S."/>
            <person name="Lu F."/>
            <person name="Nusskern D.R."/>
            <person name="Shue B.C."/>
            <person name="Zheng X.H."/>
            <person name="Zhong F."/>
            <person name="Delcher A.L."/>
            <person name="Huson D.H."/>
            <person name="Kravitz S.A."/>
            <person name="Mouchard L."/>
            <person name="Reinert K."/>
            <person name="Remington K.A."/>
            <person name="Clark A.G."/>
            <person name="Waterman M.S."/>
            <person name="Eichler E.E."/>
            <person name="Adams M.D."/>
            <person name="Hunkapiller M.W."/>
            <person name="Myers E.W."/>
            <person name="Venter J.C."/>
        </authorList>
    </citation>
    <scope>NUCLEOTIDE SEQUENCE [LARGE SCALE GENOMIC DNA]</scope>
</reference>
<reference key="4">
    <citation type="journal article" date="2004" name="Genome Res.">
        <title>The status, quality, and expansion of the NIH full-length cDNA project: the Mammalian Gene Collection (MGC).</title>
        <authorList>
            <consortium name="The MGC Project Team"/>
        </authorList>
    </citation>
    <scope>NUCLEOTIDE SEQUENCE [LARGE SCALE MRNA]</scope>
    <scope>VARIANT ASN-107</scope>
    <source>
        <tissue>Pancreas</tissue>
        <tissue>Prostate</tissue>
    </source>
</reference>
<reference key="5">
    <citation type="submission" date="1995-12" db="EMBL/GenBank/DDBJ databases">
        <authorList>
            <person name="Won M."/>
            <person name="Moon K.-M."/>
            <person name="Lee C.-E."/>
            <person name="Yoo H.S."/>
        </authorList>
    </citation>
    <scope>NUCLEOTIDE SEQUENCE [MRNA] OF 218-371</scope>
    <source>
        <tissue>Liver</tissue>
    </source>
</reference>
<reference key="6">
    <citation type="journal article" date="1993" name="Genomics">
        <title>Mapping of the human NMDA receptor subunit (NMDAR1) and the proposed NMDA receptor glutamate-binding subunit (NMDARA1) to chromosomes 9q34.3 and chromosome 8, respectively.</title>
        <authorList>
            <person name="Collins C."/>
            <person name="Duff C."/>
            <person name="Duncan A.M.V."/>
            <person name="Planells-Cases R."/>
            <person name="Sun W."/>
            <person name="Norremolle A."/>
            <person name="Michaelis E."/>
            <person name="Montal M."/>
            <person name="Worton R."/>
            <person name="Hayden M.R."/>
        </authorList>
    </citation>
    <scope>IDENTIFICATION</scope>
</reference>
<reference key="7">
    <citation type="journal article" date="2009" name="Apoptosis">
        <title>LFG: a candidate apoptosis regulatory gene family.</title>
        <authorList>
            <person name="Hu L."/>
            <person name="Smith T.F."/>
            <person name="Goldberger G."/>
        </authorList>
    </citation>
    <scope>GENE FAMILY</scope>
    <scope>NOMENCLATURE</scope>
</reference>
<sequence length="371" mass="41203">MSHEKSFLVSGDNYPPPNPGYPGGPQPPMPPYAQPPYPGAPYPQPPFQPSPYGQPGYPHGPSPYPQGGYPQGPYPQGGYPQGPYPQEGYPQGPYPQGGYPQGPYPQSPFPPNPYGQPQVFPGQDPDSPQHGNYQEEGPPSYYDNQDFPATNWDDKSIRQAFIRKVFLVLTLQLSVTLSTVSVFTFVAEVKGFVRENVWTYYVSYAVFFISLIVLSCCGDFRRKHPWNLVALSVLTASLSYMVGMIASFYNTEAVIMAVGITTAVCFTVVIFSMQTRYDFTSCMGVLLVSMVVLFIFAILCIFIRNRILEIVYASLGALLFTCFLAVDTQLLLGNKQLSLSPEEYVFAALNLYTDIINIFLYILTIIGRAKE</sequence>
<feature type="chain" id="PRO_0000314439" description="Protein lifeguard 1">
    <location>
        <begin position="1"/>
        <end position="371"/>
    </location>
</feature>
<feature type="transmembrane region" description="Helical" evidence="1">
    <location>
        <begin position="165"/>
        <end position="185"/>
    </location>
</feature>
<feature type="transmembrane region" description="Helical" evidence="1">
    <location>
        <begin position="197"/>
        <end position="217"/>
    </location>
</feature>
<feature type="transmembrane region" description="Helical" evidence="1">
    <location>
        <begin position="228"/>
        <end position="248"/>
    </location>
</feature>
<feature type="transmembrane region" description="Helical" evidence="1">
    <location>
        <begin position="253"/>
        <end position="273"/>
    </location>
</feature>
<feature type="transmembrane region" description="Helical" evidence="1">
    <location>
        <begin position="283"/>
        <end position="303"/>
    </location>
</feature>
<feature type="transmembrane region" description="Helical" evidence="1">
    <location>
        <begin position="307"/>
        <end position="327"/>
    </location>
</feature>
<feature type="transmembrane region" description="Helical" evidence="1">
    <location>
        <begin position="346"/>
        <end position="366"/>
    </location>
</feature>
<feature type="region of interest" description="Disordered" evidence="2">
    <location>
        <begin position="1"/>
        <end position="145"/>
    </location>
</feature>
<feature type="compositionally biased region" description="Pro residues" evidence="2">
    <location>
        <begin position="14"/>
        <end position="49"/>
    </location>
</feature>
<feature type="compositionally biased region" description="Low complexity" evidence="2">
    <location>
        <begin position="84"/>
        <end position="98"/>
    </location>
</feature>
<feature type="compositionally biased region" description="Pro residues" evidence="2">
    <location>
        <begin position="102"/>
        <end position="114"/>
    </location>
</feature>
<feature type="sequence variant" id="VAR_037875" description="In dbSNP:rs17854152." evidence="3">
    <original>S</original>
    <variation>N</variation>
    <location>
        <position position="107"/>
    </location>
</feature>
<feature type="sequence conflict" description="In Ref. 5; AAB94292." evidence="4" ref="5">
    <original>H</original>
    <variation>R</variation>
    <location>
        <position position="224"/>
    </location>
</feature>
<feature type="sequence conflict" description="In Ref. 5; AAB94292." evidence="4" ref="5">
    <original>A</original>
    <variation>P</variation>
    <location>
        <position position="317"/>
    </location>
</feature>
<feature type="sequence conflict" description="In Ref. 5; AAB94292." evidence="4" ref="5">
    <original>LGNKQ</original>
    <variation>REQA</variation>
    <location>
        <begin position="332"/>
        <end position="336"/>
    </location>
</feature>
<keyword id="KW-0472">Membrane</keyword>
<keyword id="KW-1267">Proteomics identification</keyword>
<keyword id="KW-1185">Reference proteome</keyword>
<keyword id="KW-0812">Transmembrane</keyword>
<keyword id="KW-1133">Transmembrane helix</keyword>
<evidence type="ECO:0000255" key="1"/>
<evidence type="ECO:0000256" key="2">
    <source>
        <dbReference type="SAM" id="MobiDB-lite"/>
    </source>
</evidence>
<evidence type="ECO:0000269" key="3">
    <source>
    </source>
</evidence>
<evidence type="ECO:0000305" key="4"/>
<organism>
    <name type="scientific">Homo sapiens</name>
    <name type="common">Human</name>
    <dbReference type="NCBI Taxonomy" id="9606"/>
    <lineage>
        <taxon>Eukaryota</taxon>
        <taxon>Metazoa</taxon>
        <taxon>Chordata</taxon>
        <taxon>Craniata</taxon>
        <taxon>Vertebrata</taxon>
        <taxon>Euteleostomi</taxon>
        <taxon>Mammalia</taxon>
        <taxon>Eutheria</taxon>
        <taxon>Euarchontoglires</taxon>
        <taxon>Primates</taxon>
        <taxon>Haplorrhini</taxon>
        <taxon>Catarrhini</taxon>
        <taxon>Hominidae</taxon>
        <taxon>Homo</taxon>
    </lineage>
</organism>
<gene>
    <name type="primary">GRINA</name>
    <name type="synonym">LFG1</name>
    <name type="synonym">NMDARA1</name>
    <name type="synonym">TMBIM3</name>
</gene>
<accession>Q7Z429</accession>
<accession>B3KXM7</accession>
<accession>O43836</accession>
<accession>Q8IVW7</accession>